<accession>Q8IYN2</accession>
<evidence type="ECO:0000255" key="1"/>
<evidence type="ECO:0000256" key="2">
    <source>
        <dbReference type="SAM" id="MobiDB-lite"/>
    </source>
</evidence>
<evidence type="ECO:0000305" key="3"/>
<protein>
    <recommendedName>
        <fullName>Transcription elongation factor A protein-like 8</fullName>
        <shortName>TCEA-like protein 8</shortName>
    </recommendedName>
    <alternativeName>
        <fullName>Transcription elongation factor S-II protein-like 8</fullName>
    </alternativeName>
</protein>
<feature type="chain" id="PRO_0000239216" description="Transcription elongation factor A protein-like 8">
    <location>
        <begin position="1"/>
        <end position="117"/>
    </location>
</feature>
<feature type="region of interest" description="Disordered" evidence="2">
    <location>
        <begin position="1"/>
        <end position="75"/>
    </location>
</feature>
<feature type="coiled-coil region" evidence="1">
    <location>
        <begin position="73"/>
        <end position="100"/>
    </location>
</feature>
<feature type="compositionally biased region" description="Basic and acidic residues" evidence="2">
    <location>
        <begin position="1"/>
        <end position="10"/>
    </location>
</feature>
<feature type="compositionally biased region" description="Basic and acidic residues" evidence="2">
    <location>
        <begin position="61"/>
        <end position="75"/>
    </location>
</feature>
<keyword id="KW-0175">Coiled coil</keyword>
<keyword id="KW-0539">Nucleus</keyword>
<keyword id="KW-1267">Proteomics identification</keyword>
<keyword id="KW-1185">Reference proteome</keyword>
<keyword id="KW-0804">Transcription</keyword>
<keyword id="KW-0805">Transcription regulation</keyword>
<sequence>MQKSCEENEGKPQNMPKAEEDRPLEDVPQEAEGNPQPSEEGVSQEAEGNPRGGPNQPGQGFKEDTPVRHLDPEEMIRGVDELERLREEIRRVRNKFVMMHWKQRHSRSRPYPVCFRP</sequence>
<gene>
    <name type="primary">TCEAL8</name>
</gene>
<dbReference type="EMBL" id="BC035573">
    <property type="protein sequence ID" value="AAH35573.1"/>
    <property type="molecule type" value="mRNA"/>
</dbReference>
<dbReference type="EMBL" id="Z68694">
    <property type="status" value="NOT_ANNOTATED_CDS"/>
    <property type="molecule type" value="Genomic_DNA"/>
</dbReference>
<dbReference type="CCDS" id="CCDS14504.1"/>
<dbReference type="RefSeq" id="NP_001006685.1">
    <property type="nucleotide sequence ID" value="NM_001006684.2"/>
</dbReference>
<dbReference type="RefSeq" id="NP_699164.1">
    <property type="nucleotide sequence ID" value="NM_153333.3"/>
</dbReference>
<dbReference type="SMR" id="Q8IYN2"/>
<dbReference type="BioGRID" id="124770">
    <property type="interactions" value="18"/>
</dbReference>
<dbReference type="FunCoup" id="Q8IYN2">
    <property type="interactions" value="15"/>
</dbReference>
<dbReference type="IntAct" id="Q8IYN2">
    <property type="interactions" value="20"/>
</dbReference>
<dbReference type="STRING" id="9606.ENSP00000361770"/>
<dbReference type="iPTMnet" id="Q8IYN2"/>
<dbReference type="PhosphoSitePlus" id="Q8IYN2"/>
<dbReference type="BioMuta" id="TCEAL8"/>
<dbReference type="DMDM" id="74762496"/>
<dbReference type="jPOST" id="Q8IYN2"/>
<dbReference type="MassIVE" id="Q8IYN2"/>
<dbReference type="PaxDb" id="9606-ENSP00000361770"/>
<dbReference type="PeptideAtlas" id="Q8IYN2"/>
<dbReference type="ProteomicsDB" id="71208"/>
<dbReference type="Antibodypedia" id="55458">
    <property type="antibodies" value="85 antibodies from 22 providers"/>
</dbReference>
<dbReference type="DNASU" id="90843"/>
<dbReference type="Ensembl" id="ENST00000360000.8">
    <property type="protein sequence ID" value="ENSP00000353093.4"/>
    <property type="gene ID" value="ENSG00000180964.17"/>
</dbReference>
<dbReference type="Ensembl" id="ENST00000372685.8">
    <property type="protein sequence ID" value="ENSP00000361770.3"/>
    <property type="gene ID" value="ENSG00000180964.17"/>
</dbReference>
<dbReference type="GeneID" id="90843"/>
<dbReference type="KEGG" id="hsa:90843"/>
<dbReference type="MANE-Select" id="ENST00000372685.8">
    <property type="protein sequence ID" value="ENSP00000361770.3"/>
    <property type="RefSeq nucleotide sequence ID" value="NM_153333.3"/>
    <property type="RefSeq protein sequence ID" value="NP_699164.1"/>
</dbReference>
<dbReference type="UCSC" id="uc004ejx.4">
    <property type="organism name" value="human"/>
</dbReference>
<dbReference type="AGR" id="HGNC:28683"/>
<dbReference type="CTD" id="90843"/>
<dbReference type="GeneCards" id="TCEAL8"/>
<dbReference type="HGNC" id="HGNC:28683">
    <property type="gene designation" value="TCEAL8"/>
</dbReference>
<dbReference type="HPA" id="ENSG00000180964">
    <property type="expression patterns" value="Low tissue specificity"/>
</dbReference>
<dbReference type="neXtProt" id="NX_Q8IYN2"/>
<dbReference type="OpenTargets" id="ENSG00000180964"/>
<dbReference type="PharmGKB" id="PA134991274"/>
<dbReference type="VEuPathDB" id="HostDB:ENSG00000180964"/>
<dbReference type="eggNOG" id="ENOG502R12B">
    <property type="taxonomic scope" value="Eukaryota"/>
</dbReference>
<dbReference type="GeneTree" id="ENSGT00950000183164"/>
<dbReference type="HOGENOM" id="CLU_181913_0_0_1"/>
<dbReference type="InParanoid" id="Q8IYN2"/>
<dbReference type="OMA" id="QTSCEEN"/>
<dbReference type="OrthoDB" id="9825341at2759"/>
<dbReference type="PAN-GO" id="Q8IYN2">
    <property type="GO annotations" value="2 GO annotations based on evolutionary models"/>
</dbReference>
<dbReference type="PhylomeDB" id="Q8IYN2"/>
<dbReference type="TreeFam" id="TF336871"/>
<dbReference type="PathwayCommons" id="Q8IYN2"/>
<dbReference type="SignaLink" id="Q8IYN2"/>
<dbReference type="BioGRID-ORCS" id="90843">
    <property type="hits" value="9 hits in 771 CRISPR screens"/>
</dbReference>
<dbReference type="GenomeRNAi" id="90843"/>
<dbReference type="Pharos" id="Q8IYN2">
    <property type="development level" value="Tdark"/>
</dbReference>
<dbReference type="PRO" id="PR:Q8IYN2"/>
<dbReference type="Proteomes" id="UP000005640">
    <property type="component" value="Chromosome X"/>
</dbReference>
<dbReference type="RNAct" id="Q8IYN2">
    <property type="molecule type" value="protein"/>
</dbReference>
<dbReference type="Bgee" id="ENSG00000180964">
    <property type="expression patterns" value="Expressed in calcaneal tendon and 179 other cell types or tissues"/>
</dbReference>
<dbReference type="ExpressionAtlas" id="Q8IYN2">
    <property type="expression patterns" value="baseline and differential"/>
</dbReference>
<dbReference type="GO" id="GO:0005634">
    <property type="term" value="C:nucleus"/>
    <property type="evidence" value="ECO:0007669"/>
    <property type="project" value="UniProtKB-SubCell"/>
</dbReference>
<dbReference type="InterPro" id="IPR021156">
    <property type="entry name" value="TF_A-like/BEX"/>
</dbReference>
<dbReference type="Pfam" id="PF04538">
    <property type="entry name" value="BEX"/>
    <property type="match status" value="1"/>
</dbReference>
<name>TCAL8_HUMAN</name>
<comment type="function">
    <text>May be involved in transcriptional regulation.</text>
</comment>
<comment type="interaction">
    <interactant intactId="EBI-2116184">
        <id>Q8IYN2</id>
    </interactant>
    <interactant intactId="EBI-1104933">
        <id>Q8N4L8</id>
        <label>CCDC24</label>
    </interactant>
    <organismsDiffer>false</organismsDiffer>
    <experiments>3</experiments>
</comment>
<comment type="interaction">
    <interactant intactId="EBI-2116184">
        <id>Q8IYN2</id>
    </interactant>
    <interactant intactId="EBI-12300031">
        <id>Q9NNX6-10</id>
        <label>CD209</label>
    </interactant>
    <organismsDiffer>false</organismsDiffer>
    <experiments>3</experiments>
</comment>
<comment type="interaction">
    <interactant intactId="EBI-2116184">
        <id>Q8IYN2</id>
    </interactant>
    <interactant intactId="EBI-1550112">
        <id>Q8N668</id>
        <label>COMMD1</label>
    </interactant>
    <organismsDiffer>false</organismsDiffer>
    <experiments>3</experiments>
</comment>
<comment type="interaction">
    <interactant intactId="EBI-2116184">
        <id>Q8IYN2</id>
    </interactant>
    <interactant intactId="EBI-747754">
        <id>P28799</id>
        <label>GRN</label>
    </interactant>
    <organismsDiffer>false</organismsDiffer>
    <experiments>3</experiments>
</comment>
<comment type="interaction">
    <interactant intactId="EBI-2116184">
        <id>Q8IYN2</id>
    </interactant>
    <interactant intactId="EBI-352682">
        <id>P04792</id>
        <label>HSPB1</label>
    </interactant>
    <organismsDiffer>false</organismsDiffer>
    <experiments>3</experiments>
</comment>
<comment type="interaction">
    <interactant intactId="EBI-2116184">
        <id>Q8IYN2</id>
    </interactant>
    <interactant intactId="EBI-10975473">
        <id>O60333-2</id>
        <label>KIF1B</label>
    </interactant>
    <organismsDiffer>false</organismsDiffer>
    <experiments>3</experiments>
</comment>
<comment type="interaction">
    <interactant intactId="EBI-2116184">
        <id>Q8IYN2</id>
    </interactant>
    <interactant intactId="EBI-396669">
        <id>Q9Y3C5</id>
        <label>RNF11</label>
    </interactant>
    <organismsDiffer>false</organismsDiffer>
    <experiments>3</experiments>
</comment>
<comment type="interaction">
    <interactant intactId="EBI-2116184">
        <id>Q8IYN2</id>
    </interactant>
    <interactant intactId="EBI-5235340">
        <id>Q7Z699</id>
        <label>SPRED1</label>
    </interactant>
    <organismsDiffer>false</organismsDiffer>
    <experiments>3</experiments>
</comment>
<comment type="interaction">
    <interactant intactId="EBI-2116184">
        <id>Q8IYN2</id>
    </interactant>
    <interactant intactId="EBI-720609">
        <id>O76024</id>
        <label>WFS1</label>
    </interactant>
    <organismsDiffer>false</organismsDiffer>
    <experiments>3</experiments>
</comment>
<comment type="interaction">
    <interactant intactId="EBI-2116184">
        <id>Q8IYN2</id>
    </interactant>
    <interactant intactId="EBI-1048893">
        <id>P54577</id>
        <label>YARS1</label>
    </interactant>
    <organismsDiffer>false</organismsDiffer>
    <experiments>3</experiments>
</comment>
<comment type="subcellular location">
    <subcellularLocation>
        <location evidence="3">Nucleus</location>
    </subcellularLocation>
</comment>
<comment type="similarity">
    <text evidence="3">Belongs to the TFS-II family. TFA subfamily.</text>
</comment>
<reference key="1">
    <citation type="journal article" date="2005" name="Nature">
        <title>The DNA sequence of the human X chromosome.</title>
        <authorList>
            <person name="Ross M.T."/>
            <person name="Grafham D.V."/>
            <person name="Coffey A.J."/>
            <person name="Scherer S."/>
            <person name="McLay K."/>
            <person name="Muzny D."/>
            <person name="Platzer M."/>
            <person name="Howell G.R."/>
            <person name="Burrows C."/>
            <person name="Bird C.P."/>
            <person name="Frankish A."/>
            <person name="Lovell F.L."/>
            <person name="Howe K.L."/>
            <person name="Ashurst J.L."/>
            <person name="Fulton R.S."/>
            <person name="Sudbrak R."/>
            <person name="Wen G."/>
            <person name="Jones M.C."/>
            <person name="Hurles M.E."/>
            <person name="Andrews T.D."/>
            <person name="Scott C.E."/>
            <person name="Searle S."/>
            <person name="Ramser J."/>
            <person name="Whittaker A."/>
            <person name="Deadman R."/>
            <person name="Carter N.P."/>
            <person name="Hunt S.E."/>
            <person name="Chen R."/>
            <person name="Cree A."/>
            <person name="Gunaratne P."/>
            <person name="Havlak P."/>
            <person name="Hodgson A."/>
            <person name="Metzker M.L."/>
            <person name="Richards S."/>
            <person name="Scott G."/>
            <person name="Steffen D."/>
            <person name="Sodergren E."/>
            <person name="Wheeler D.A."/>
            <person name="Worley K.C."/>
            <person name="Ainscough R."/>
            <person name="Ambrose K.D."/>
            <person name="Ansari-Lari M.A."/>
            <person name="Aradhya S."/>
            <person name="Ashwell R.I."/>
            <person name="Babbage A.K."/>
            <person name="Bagguley C.L."/>
            <person name="Ballabio A."/>
            <person name="Banerjee R."/>
            <person name="Barker G.E."/>
            <person name="Barlow K.F."/>
            <person name="Barrett I.P."/>
            <person name="Bates K.N."/>
            <person name="Beare D.M."/>
            <person name="Beasley H."/>
            <person name="Beasley O."/>
            <person name="Beck A."/>
            <person name="Bethel G."/>
            <person name="Blechschmidt K."/>
            <person name="Brady N."/>
            <person name="Bray-Allen S."/>
            <person name="Bridgeman A.M."/>
            <person name="Brown A.J."/>
            <person name="Brown M.J."/>
            <person name="Bonnin D."/>
            <person name="Bruford E.A."/>
            <person name="Buhay C."/>
            <person name="Burch P."/>
            <person name="Burford D."/>
            <person name="Burgess J."/>
            <person name="Burrill W."/>
            <person name="Burton J."/>
            <person name="Bye J.M."/>
            <person name="Carder C."/>
            <person name="Carrel L."/>
            <person name="Chako J."/>
            <person name="Chapman J.C."/>
            <person name="Chavez D."/>
            <person name="Chen E."/>
            <person name="Chen G."/>
            <person name="Chen Y."/>
            <person name="Chen Z."/>
            <person name="Chinault C."/>
            <person name="Ciccodicola A."/>
            <person name="Clark S.Y."/>
            <person name="Clarke G."/>
            <person name="Clee C.M."/>
            <person name="Clegg S."/>
            <person name="Clerc-Blankenburg K."/>
            <person name="Clifford K."/>
            <person name="Cobley V."/>
            <person name="Cole C.G."/>
            <person name="Conquer J.S."/>
            <person name="Corby N."/>
            <person name="Connor R.E."/>
            <person name="David R."/>
            <person name="Davies J."/>
            <person name="Davis C."/>
            <person name="Davis J."/>
            <person name="Delgado O."/>
            <person name="Deshazo D."/>
            <person name="Dhami P."/>
            <person name="Ding Y."/>
            <person name="Dinh H."/>
            <person name="Dodsworth S."/>
            <person name="Draper H."/>
            <person name="Dugan-Rocha S."/>
            <person name="Dunham A."/>
            <person name="Dunn M."/>
            <person name="Durbin K.J."/>
            <person name="Dutta I."/>
            <person name="Eades T."/>
            <person name="Ellwood M."/>
            <person name="Emery-Cohen A."/>
            <person name="Errington H."/>
            <person name="Evans K.L."/>
            <person name="Faulkner L."/>
            <person name="Francis F."/>
            <person name="Frankland J."/>
            <person name="Fraser A.E."/>
            <person name="Galgoczy P."/>
            <person name="Gilbert J."/>
            <person name="Gill R."/>
            <person name="Gloeckner G."/>
            <person name="Gregory S.G."/>
            <person name="Gribble S."/>
            <person name="Griffiths C."/>
            <person name="Grocock R."/>
            <person name="Gu Y."/>
            <person name="Gwilliam R."/>
            <person name="Hamilton C."/>
            <person name="Hart E.A."/>
            <person name="Hawes A."/>
            <person name="Heath P.D."/>
            <person name="Heitmann K."/>
            <person name="Hennig S."/>
            <person name="Hernandez J."/>
            <person name="Hinzmann B."/>
            <person name="Ho S."/>
            <person name="Hoffs M."/>
            <person name="Howden P.J."/>
            <person name="Huckle E.J."/>
            <person name="Hume J."/>
            <person name="Hunt P.J."/>
            <person name="Hunt A.R."/>
            <person name="Isherwood J."/>
            <person name="Jacob L."/>
            <person name="Johnson D."/>
            <person name="Jones S."/>
            <person name="de Jong P.J."/>
            <person name="Joseph S.S."/>
            <person name="Keenan S."/>
            <person name="Kelly S."/>
            <person name="Kershaw J.K."/>
            <person name="Khan Z."/>
            <person name="Kioschis P."/>
            <person name="Klages S."/>
            <person name="Knights A.J."/>
            <person name="Kosiura A."/>
            <person name="Kovar-Smith C."/>
            <person name="Laird G.K."/>
            <person name="Langford C."/>
            <person name="Lawlor S."/>
            <person name="Leversha M."/>
            <person name="Lewis L."/>
            <person name="Liu W."/>
            <person name="Lloyd C."/>
            <person name="Lloyd D.M."/>
            <person name="Loulseged H."/>
            <person name="Loveland J.E."/>
            <person name="Lovell J.D."/>
            <person name="Lozado R."/>
            <person name="Lu J."/>
            <person name="Lyne R."/>
            <person name="Ma J."/>
            <person name="Maheshwari M."/>
            <person name="Matthews L.H."/>
            <person name="McDowall J."/>
            <person name="McLaren S."/>
            <person name="McMurray A."/>
            <person name="Meidl P."/>
            <person name="Meitinger T."/>
            <person name="Milne S."/>
            <person name="Miner G."/>
            <person name="Mistry S.L."/>
            <person name="Morgan M."/>
            <person name="Morris S."/>
            <person name="Mueller I."/>
            <person name="Mullikin J.C."/>
            <person name="Nguyen N."/>
            <person name="Nordsiek G."/>
            <person name="Nyakatura G."/>
            <person name="O'dell C.N."/>
            <person name="Okwuonu G."/>
            <person name="Palmer S."/>
            <person name="Pandian R."/>
            <person name="Parker D."/>
            <person name="Parrish J."/>
            <person name="Pasternak S."/>
            <person name="Patel D."/>
            <person name="Pearce A.V."/>
            <person name="Pearson D.M."/>
            <person name="Pelan S.E."/>
            <person name="Perez L."/>
            <person name="Porter K.M."/>
            <person name="Ramsey Y."/>
            <person name="Reichwald K."/>
            <person name="Rhodes S."/>
            <person name="Ridler K.A."/>
            <person name="Schlessinger D."/>
            <person name="Schueler M.G."/>
            <person name="Sehra H.K."/>
            <person name="Shaw-Smith C."/>
            <person name="Shen H."/>
            <person name="Sheridan E.M."/>
            <person name="Shownkeen R."/>
            <person name="Skuce C.D."/>
            <person name="Smith M.L."/>
            <person name="Sotheran E.C."/>
            <person name="Steingruber H.E."/>
            <person name="Steward C.A."/>
            <person name="Storey R."/>
            <person name="Swann R.M."/>
            <person name="Swarbreck D."/>
            <person name="Tabor P.E."/>
            <person name="Taudien S."/>
            <person name="Taylor T."/>
            <person name="Teague B."/>
            <person name="Thomas K."/>
            <person name="Thorpe A."/>
            <person name="Timms K."/>
            <person name="Tracey A."/>
            <person name="Trevanion S."/>
            <person name="Tromans A.C."/>
            <person name="d'Urso M."/>
            <person name="Verduzco D."/>
            <person name="Villasana D."/>
            <person name="Waldron L."/>
            <person name="Wall M."/>
            <person name="Wang Q."/>
            <person name="Warren J."/>
            <person name="Warry G.L."/>
            <person name="Wei X."/>
            <person name="West A."/>
            <person name="Whitehead S.L."/>
            <person name="Whiteley M.N."/>
            <person name="Wilkinson J.E."/>
            <person name="Willey D.L."/>
            <person name="Williams G."/>
            <person name="Williams L."/>
            <person name="Williamson A."/>
            <person name="Williamson H."/>
            <person name="Wilming L."/>
            <person name="Woodmansey R.L."/>
            <person name="Wray P.W."/>
            <person name="Yen J."/>
            <person name="Zhang J."/>
            <person name="Zhou J."/>
            <person name="Zoghbi H."/>
            <person name="Zorilla S."/>
            <person name="Buck D."/>
            <person name="Reinhardt R."/>
            <person name="Poustka A."/>
            <person name="Rosenthal A."/>
            <person name="Lehrach H."/>
            <person name="Meindl A."/>
            <person name="Minx P.J."/>
            <person name="Hillier L.W."/>
            <person name="Willard H.F."/>
            <person name="Wilson R.K."/>
            <person name="Waterston R.H."/>
            <person name="Rice C.M."/>
            <person name="Vaudin M."/>
            <person name="Coulson A."/>
            <person name="Nelson D.L."/>
            <person name="Weinstock G."/>
            <person name="Sulston J.E."/>
            <person name="Durbin R.M."/>
            <person name="Hubbard T."/>
            <person name="Gibbs R.A."/>
            <person name="Beck S."/>
            <person name="Rogers J."/>
            <person name="Bentley D.R."/>
        </authorList>
    </citation>
    <scope>NUCLEOTIDE SEQUENCE [LARGE SCALE GENOMIC DNA]</scope>
</reference>
<reference key="2">
    <citation type="journal article" date="2004" name="Genome Res.">
        <title>The status, quality, and expansion of the NIH full-length cDNA project: the Mammalian Gene Collection (MGC).</title>
        <authorList>
            <consortium name="The MGC Project Team"/>
        </authorList>
    </citation>
    <scope>NUCLEOTIDE SEQUENCE [LARGE SCALE MRNA]</scope>
    <source>
        <tissue>Liver</tissue>
    </source>
</reference>
<organism>
    <name type="scientific">Homo sapiens</name>
    <name type="common">Human</name>
    <dbReference type="NCBI Taxonomy" id="9606"/>
    <lineage>
        <taxon>Eukaryota</taxon>
        <taxon>Metazoa</taxon>
        <taxon>Chordata</taxon>
        <taxon>Craniata</taxon>
        <taxon>Vertebrata</taxon>
        <taxon>Euteleostomi</taxon>
        <taxon>Mammalia</taxon>
        <taxon>Eutheria</taxon>
        <taxon>Euarchontoglires</taxon>
        <taxon>Primates</taxon>
        <taxon>Haplorrhini</taxon>
        <taxon>Catarrhini</taxon>
        <taxon>Hominidae</taxon>
        <taxon>Homo</taxon>
    </lineage>
</organism>
<proteinExistence type="evidence at protein level"/>